<reference key="1">
    <citation type="submission" date="2008-10" db="EMBL/GenBank/DDBJ databases">
        <title>Genome sequence of Clostridium botulinum A2 Kyoto.</title>
        <authorList>
            <person name="Shrivastava S."/>
            <person name="Brinkac L.M."/>
            <person name="Brown J.L."/>
            <person name="Bruce D."/>
            <person name="Detter C.C."/>
            <person name="Johnson E.A."/>
            <person name="Munk C.A."/>
            <person name="Smith L.A."/>
            <person name="Smith T.J."/>
            <person name="Sutton G."/>
            <person name="Brettin T.S."/>
        </authorList>
    </citation>
    <scope>NUCLEOTIDE SEQUENCE [LARGE SCALE GENOMIC DNA]</scope>
    <source>
        <strain>Kyoto / Type A2</strain>
    </source>
</reference>
<dbReference type="EMBL" id="CP001581">
    <property type="protein sequence ID" value="ACO83972.1"/>
    <property type="molecule type" value="Genomic_DNA"/>
</dbReference>
<dbReference type="RefSeq" id="WP_003358923.1">
    <property type="nucleotide sequence ID" value="NC_012563.1"/>
</dbReference>
<dbReference type="SMR" id="C1FNT6"/>
<dbReference type="GeneID" id="92938492"/>
<dbReference type="KEGG" id="cby:CLM_1954"/>
<dbReference type="eggNOG" id="COG1923">
    <property type="taxonomic scope" value="Bacteria"/>
</dbReference>
<dbReference type="HOGENOM" id="CLU_113688_0_2_9"/>
<dbReference type="Proteomes" id="UP000001374">
    <property type="component" value="Chromosome"/>
</dbReference>
<dbReference type="GO" id="GO:0005829">
    <property type="term" value="C:cytosol"/>
    <property type="evidence" value="ECO:0007669"/>
    <property type="project" value="TreeGrafter"/>
</dbReference>
<dbReference type="GO" id="GO:0003723">
    <property type="term" value="F:RNA binding"/>
    <property type="evidence" value="ECO:0007669"/>
    <property type="project" value="UniProtKB-UniRule"/>
</dbReference>
<dbReference type="GO" id="GO:0006355">
    <property type="term" value="P:regulation of DNA-templated transcription"/>
    <property type="evidence" value="ECO:0007669"/>
    <property type="project" value="InterPro"/>
</dbReference>
<dbReference type="GO" id="GO:0043487">
    <property type="term" value="P:regulation of RNA stability"/>
    <property type="evidence" value="ECO:0007669"/>
    <property type="project" value="TreeGrafter"/>
</dbReference>
<dbReference type="GO" id="GO:0045974">
    <property type="term" value="P:regulation of translation, ncRNA-mediated"/>
    <property type="evidence" value="ECO:0007669"/>
    <property type="project" value="TreeGrafter"/>
</dbReference>
<dbReference type="CDD" id="cd01716">
    <property type="entry name" value="Hfq"/>
    <property type="match status" value="1"/>
</dbReference>
<dbReference type="FunFam" id="2.30.30.100:FF:000012">
    <property type="entry name" value="RNA-binding protein Hfq"/>
    <property type="match status" value="1"/>
</dbReference>
<dbReference type="Gene3D" id="2.30.30.100">
    <property type="match status" value="1"/>
</dbReference>
<dbReference type="HAMAP" id="MF_00436">
    <property type="entry name" value="Hfq"/>
    <property type="match status" value="1"/>
</dbReference>
<dbReference type="InterPro" id="IPR005001">
    <property type="entry name" value="Hfq"/>
</dbReference>
<dbReference type="InterPro" id="IPR010920">
    <property type="entry name" value="LSM_dom_sf"/>
</dbReference>
<dbReference type="InterPro" id="IPR047575">
    <property type="entry name" value="Sm"/>
</dbReference>
<dbReference type="NCBIfam" id="TIGR02383">
    <property type="entry name" value="Hfq"/>
    <property type="match status" value="1"/>
</dbReference>
<dbReference type="NCBIfam" id="NF001602">
    <property type="entry name" value="PRK00395.1"/>
    <property type="match status" value="1"/>
</dbReference>
<dbReference type="PANTHER" id="PTHR34772">
    <property type="entry name" value="RNA-BINDING PROTEIN HFQ"/>
    <property type="match status" value="1"/>
</dbReference>
<dbReference type="PANTHER" id="PTHR34772:SF1">
    <property type="entry name" value="RNA-BINDING PROTEIN HFQ"/>
    <property type="match status" value="1"/>
</dbReference>
<dbReference type="Pfam" id="PF17209">
    <property type="entry name" value="Hfq"/>
    <property type="match status" value="1"/>
</dbReference>
<dbReference type="SUPFAM" id="SSF50182">
    <property type="entry name" value="Sm-like ribonucleoproteins"/>
    <property type="match status" value="1"/>
</dbReference>
<dbReference type="PROSITE" id="PS52002">
    <property type="entry name" value="SM"/>
    <property type="match status" value="1"/>
</dbReference>
<keyword id="KW-0694">RNA-binding</keyword>
<keyword id="KW-0346">Stress response</keyword>
<accession>C1FNT6</accession>
<comment type="function">
    <text evidence="1">RNA chaperone that binds small regulatory RNA (sRNAs) and mRNAs to facilitate mRNA translational regulation in response to envelope stress, environmental stress and changes in metabolite concentrations. Also binds with high specificity to tRNAs.</text>
</comment>
<comment type="subunit">
    <text evidence="1">Homohexamer.</text>
</comment>
<comment type="similarity">
    <text evidence="1">Belongs to the Hfq family.</text>
</comment>
<sequence length="85" mass="9664">MTKVVNNLQDIFLNGARKNRIPVTIYLTNGFQLKGFVKGFDNFTVILDSDGKQMMIYKHAISTINPAKPLLFVQNPNGDDYKDKE</sequence>
<gene>
    <name evidence="1" type="primary">hfq</name>
    <name type="ordered locus">CLM_1954</name>
</gene>
<feature type="chain" id="PRO_1000135026" description="RNA-binding protein Hfq">
    <location>
        <begin position="1"/>
        <end position="85"/>
    </location>
</feature>
<feature type="domain" description="Sm" evidence="2">
    <location>
        <begin position="10"/>
        <end position="70"/>
    </location>
</feature>
<name>HFQ_CLOBJ</name>
<organism>
    <name type="scientific">Clostridium botulinum (strain Kyoto / Type A2)</name>
    <dbReference type="NCBI Taxonomy" id="536232"/>
    <lineage>
        <taxon>Bacteria</taxon>
        <taxon>Bacillati</taxon>
        <taxon>Bacillota</taxon>
        <taxon>Clostridia</taxon>
        <taxon>Eubacteriales</taxon>
        <taxon>Clostridiaceae</taxon>
        <taxon>Clostridium</taxon>
    </lineage>
</organism>
<protein>
    <recommendedName>
        <fullName evidence="1">RNA-binding protein Hfq</fullName>
    </recommendedName>
</protein>
<evidence type="ECO:0000255" key="1">
    <source>
        <dbReference type="HAMAP-Rule" id="MF_00436"/>
    </source>
</evidence>
<evidence type="ECO:0000255" key="2">
    <source>
        <dbReference type="PROSITE-ProRule" id="PRU01346"/>
    </source>
</evidence>
<proteinExistence type="inferred from homology"/>